<evidence type="ECO:0000255" key="1">
    <source>
        <dbReference type="PROSITE-ProRule" id="PRU00513"/>
    </source>
</evidence>
<accession>P29718</accession>
<name>YCEA_PAELA</name>
<organism>
    <name type="scientific">Paenibacillus lautus</name>
    <name type="common">Bacillus lautus</name>
    <dbReference type="NCBI Taxonomy" id="1401"/>
    <lineage>
        <taxon>Bacteria</taxon>
        <taxon>Bacillati</taxon>
        <taxon>Bacillota</taxon>
        <taxon>Bacilli</taxon>
        <taxon>Bacillales</taxon>
        <taxon>Paenibacillaceae</taxon>
        <taxon>Paenibacillus</taxon>
    </lineage>
</organism>
<reference key="1">
    <citation type="journal article" date="1992" name="J. Bacteriol.">
        <title>celA from Bacillus lautus PL236 encodes a novel cellulose-binding endo-beta-1,4-glucanase.</title>
        <authorList>
            <person name="Hansen C.K."/>
            <person name="Diderichsen B."/>
            <person name="Joergensen P.L."/>
        </authorList>
    </citation>
    <scope>NUCLEOTIDE SEQUENCE [GENOMIC DNA]</scope>
    <source>
        <strain>PL236</strain>
    </source>
</reference>
<dbReference type="EMBL" id="M76588">
    <property type="protein sequence ID" value="AAA22302.1"/>
    <property type="molecule type" value="Genomic_DNA"/>
</dbReference>
<dbReference type="PIR" id="A41897">
    <property type="entry name" value="A41897"/>
</dbReference>
<dbReference type="SMR" id="P29718"/>
<dbReference type="CAZy" id="CBM3">
    <property type="family name" value="Carbohydrate-Binding Module Family 3"/>
</dbReference>
<dbReference type="GO" id="GO:0030248">
    <property type="term" value="F:cellulose binding"/>
    <property type="evidence" value="ECO:0007669"/>
    <property type="project" value="InterPro"/>
</dbReference>
<dbReference type="GO" id="GO:0005975">
    <property type="term" value="P:carbohydrate metabolic process"/>
    <property type="evidence" value="ECO:0007669"/>
    <property type="project" value="InterPro"/>
</dbReference>
<dbReference type="Gene3D" id="2.60.40.710">
    <property type="entry name" value="Endoglucanase-like"/>
    <property type="match status" value="1"/>
</dbReference>
<dbReference type="InterPro" id="IPR008965">
    <property type="entry name" value="CBM2/CBM3_carb-bd_dom_sf"/>
</dbReference>
<dbReference type="InterPro" id="IPR001956">
    <property type="entry name" value="CBM3"/>
</dbReference>
<dbReference type="InterPro" id="IPR036966">
    <property type="entry name" value="CBM3_sf"/>
</dbReference>
<dbReference type="Pfam" id="PF00942">
    <property type="entry name" value="CBM_3"/>
    <property type="match status" value="1"/>
</dbReference>
<dbReference type="SMART" id="SM01067">
    <property type="entry name" value="CBM_3"/>
    <property type="match status" value="1"/>
</dbReference>
<dbReference type="SUPFAM" id="SSF49384">
    <property type="entry name" value="Carbohydrate-binding domain"/>
    <property type="match status" value="1"/>
</dbReference>
<dbReference type="PROSITE" id="PS51172">
    <property type="entry name" value="CBM3"/>
    <property type="match status" value="1"/>
</dbReference>
<protein>
    <recommendedName>
        <fullName>Uncharacterized protein in celA 5'region</fullName>
    </recommendedName>
</protein>
<feature type="chain" id="PRO_0000066173" description="Uncharacterized protein in celA 5'region">
    <location>
        <begin position="1" status="less than"/>
        <end position="145"/>
    </location>
</feature>
<feature type="domain" description="CBM3" evidence="1">
    <location>
        <begin position="1" status="less than"/>
        <end position="145"/>
    </location>
</feature>
<feature type="non-terminal residue">
    <location>
        <position position="1"/>
    </location>
</feature>
<proteinExistence type="predicted"/>
<sequence length="145" mass="15782">LQYRAADTNAADNQIKPSFNIKNNGTSAVDLSTLKIRYYFTKDGSAAVNGWIDWAQLGGSNIQISFGNHTGTNSDTYVELSFSSEAGSIAAGGQSGETQLRMSKTDWSNFNEANDYSFDGTKTAFADWDRVVLYQNGQIVWGTAP</sequence>